<proteinExistence type="evidence at protein level"/>
<comment type="interaction">
    <interactant intactId="EBI-320322">
        <id>P34453</id>
    </interactant>
    <interactant intactId="EBI-320312">
        <id>Q19766</id>
        <label>tomm-20</label>
    </interactant>
    <organismsDiffer>false</organismsDiffer>
    <experiments>3</experiments>
</comment>
<comment type="subcellular location">
    <subcellularLocation>
        <location evidence="3">Peroxisome</location>
    </subcellularLocation>
</comment>
<comment type="similarity">
    <text evidence="3">Belongs to the peroxin-19 family.</text>
</comment>
<organism>
    <name type="scientific">Caenorhabditis elegans</name>
    <dbReference type="NCBI Taxonomy" id="6239"/>
    <lineage>
        <taxon>Eukaryota</taxon>
        <taxon>Metazoa</taxon>
        <taxon>Ecdysozoa</taxon>
        <taxon>Nematoda</taxon>
        <taxon>Chromadorea</taxon>
        <taxon>Rhabditida</taxon>
        <taxon>Rhabditina</taxon>
        <taxon>Rhabditomorpha</taxon>
        <taxon>Rhabditoidea</taxon>
        <taxon>Rhabditidae</taxon>
        <taxon>Peloderinae</taxon>
        <taxon>Caenorhabditis</taxon>
    </lineage>
</organism>
<sequence length="282" mass="30988">MTDETTQNIKDKTEEELAALLDQTLGEFTATPAPKPRTTDDELDELMASADQEAAQKAAKDFQKMLEQMVTLQEEAMKKAGADPSEGEGEQPLDPNDPEALAMMDALKQLMECSSNVANASNPEEFMAGLDMLRSPNSPMEPFMSMIMQTLASKEVMYPPLKEIFDNYPKYLEDNGAGLDAETKERYEKQFEVLGKICTEFEKQPELAEVQPVDAATQPAPEADPASIEHFEKLGKLLVELQQYGYPPKELVGALPDGWQIDESGLPKVADAAAATEACSIM</sequence>
<keyword id="KW-0449">Lipoprotein</keyword>
<keyword id="KW-0488">Methylation</keyword>
<keyword id="KW-0576">Peroxisome</keyword>
<keyword id="KW-0636">Prenylation</keyword>
<keyword id="KW-1185">Reference proteome</keyword>
<dbReference type="EMBL" id="FO081385">
    <property type="protein sequence ID" value="CCD71242.1"/>
    <property type="molecule type" value="Genomic_DNA"/>
</dbReference>
<dbReference type="PIR" id="S44825">
    <property type="entry name" value="S44825"/>
</dbReference>
<dbReference type="RefSeq" id="NP_498947.1">
    <property type="nucleotide sequence ID" value="NM_066546.9"/>
</dbReference>
<dbReference type="SMR" id="P34453"/>
<dbReference type="BioGRID" id="41441">
    <property type="interactions" value="6"/>
</dbReference>
<dbReference type="DIP" id="DIP-25994N"/>
<dbReference type="FunCoup" id="P34453">
    <property type="interactions" value="3070"/>
</dbReference>
<dbReference type="IntAct" id="P34453">
    <property type="interactions" value="2"/>
</dbReference>
<dbReference type="STRING" id="6239.F54F2.8.2"/>
<dbReference type="PaxDb" id="6239-F54F2.8.1"/>
<dbReference type="PeptideAtlas" id="P34453"/>
<dbReference type="EnsemblMetazoa" id="F54F2.8.1">
    <property type="protein sequence ID" value="F54F2.8.1"/>
    <property type="gene ID" value="WBGene00004201"/>
</dbReference>
<dbReference type="GeneID" id="176239"/>
<dbReference type="KEGG" id="cel:CELE_F54F2.8"/>
<dbReference type="UCSC" id="F54F2.8.1">
    <property type="organism name" value="c. elegans"/>
</dbReference>
<dbReference type="AGR" id="WB:WBGene00004201"/>
<dbReference type="CTD" id="176239"/>
<dbReference type="WormBase" id="F54F2.8">
    <property type="protein sequence ID" value="CE00201"/>
    <property type="gene ID" value="WBGene00004201"/>
    <property type="gene designation" value="prx-19"/>
</dbReference>
<dbReference type="eggNOG" id="KOG3133">
    <property type="taxonomic scope" value="Eukaryota"/>
</dbReference>
<dbReference type="GeneTree" id="ENSGT00390000010993"/>
<dbReference type="HOGENOM" id="CLU_043063_3_0_1"/>
<dbReference type="InParanoid" id="P34453"/>
<dbReference type="OMA" id="ASKEVMY"/>
<dbReference type="OrthoDB" id="21292at2759"/>
<dbReference type="PhylomeDB" id="P34453"/>
<dbReference type="Reactome" id="R-CEL-1369062">
    <property type="pathway name" value="ABC transporters in lipid homeostasis"/>
</dbReference>
<dbReference type="Reactome" id="R-CEL-9603798">
    <property type="pathway name" value="Class I peroxisomal membrane protein import"/>
</dbReference>
<dbReference type="PRO" id="PR:P34453"/>
<dbReference type="Proteomes" id="UP000001940">
    <property type="component" value="Chromosome III"/>
</dbReference>
<dbReference type="Bgee" id="WBGene00004201">
    <property type="expression patterns" value="Expressed in pharyngeal muscle cell (C elegans) and 4 other cell types or tissues"/>
</dbReference>
<dbReference type="GO" id="GO:0005778">
    <property type="term" value="C:peroxisomal membrane"/>
    <property type="evidence" value="ECO:0000318"/>
    <property type="project" value="GO_Central"/>
</dbReference>
<dbReference type="GO" id="GO:0033328">
    <property type="term" value="F:peroxisome membrane targeting sequence binding"/>
    <property type="evidence" value="ECO:0000318"/>
    <property type="project" value="GO_Central"/>
</dbReference>
<dbReference type="GO" id="GO:0002119">
    <property type="term" value="P:nematode larval development"/>
    <property type="evidence" value="ECO:0000315"/>
    <property type="project" value="WormBase"/>
</dbReference>
<dbReference type="GO" id="GO:0045046">
    <property type="term" value="P:protein import into peroxisome membrane"/>
    <property type="evidence" value="ECO:0000318"/>
    <property type="project" value="GO_Central"/>
</dbReference>
<dbReference type="Gene3D" id="1.20.120.900">
    <property type="entry name" value="Pex19, mPTS binding domain"/>
    <property type="match status" value="1"/>
</dbReference>
<dbReference type="InterPro" id="IPR006708">
    <property type="entry name" value="Pex19"/>
</dbReference>
<dbReference type="InterPro" id="IPR038322">
    <property type="entry name" value="Pex19_C_sf"/>
</dbReference>
<dbReference type="PANTHER" id="PTHR12774">
    <property type="entry name" value="PEROXISOMAL BIOGENESIS FACTOR 19"/>
    <property type="match status" value="1"/>
</dbReference>
<dbReference type="PANTHER" id="PTHR12774:SF2">
    <property type="entry name" value="PEROXISOMAL BIOGENESIS FACTOR 19"/>
    <property type="match status" value="1"/>
</dbReference>
<dbReference type="Pfam" id="PF04614">
    <property type="entry name" value="Pex19"/>
    <property type="match status" value="1"/>
</dbReference>
<gene>
    <name type="primary">prx-19</name>
    <name type="ORF">F54F2.8</name>
</gene>
<accession>P34453</accession>
<feature type="chain" id="PRO_0000218762" description="Putative peroxisomal biogenesis factor 19">
    <location>
        <begin position="1"/>
        <end position="279"/>
    </location>
</feature>
<feature type="propeptide" id="PRO_0000396704" description="Removed in mature form" evidence="1">
    <location>
        <begin position="280"/>
        <end position="282"/>
    </location>
</feature>
<feature type="region of interest" description="Disordered" evidence="2">
    <location>
        <begin position="73"/>
        <end position="95"/>
    </location>
</feature>
<feature type="modified residue" description="Cysteine methyl ester" evidence="1">
    <location>
        <position position="279"/>
    </location>
</feature>
<feature type="lipid moiety-binding region" description="S-farnesyl cysteine" evidence="1">
    <location>
        <position position="279"/>
    </location>
</feature>
<protein>
    <recommendedName>
        <fullName>Putative peroxisomal biogenesis factor 19</fullName>
    </recommendedName>
    <alternativeName>
        <fullName>Peroxin-19</fullName>
    </alternativeName>
</protein>
<evidence type="ECO:0000255" key="1"/>
<evidence type="ECO:0000256" key="2">
    <source>
        <dbReference type="SAM" id="MobiDB-lite"/>
    </source>
</evidence>
<evidence type="ECO:0000305" key="3"/>
<reference key="1">
    <citation type="journal article" date="1994" name="Nature">
        <title>2.2 Mb of contiguous nucleotide sequence from chromosome III of C. elegans.</title>
        <authorList>
            <person name="Wilson R."/>
            <person name="Ainscough R."/>
            <person name="Anderson K."/>
            <person name="Baynes C."/>
            <person name="Berks M."/>
            <person name="Bonfield J."/>
            <person name="Burton J."/>
            <person name="Connell M."/>
            <person name="Copsey T."/>
            <person name="Cooper J."/>
            <person name="Coulson A."/>
            <person name="Craxton M."/>
            <person name="Dear S."/>
            <person name="Du Z."/>
            <person name="Durbin R."/>
            <person name="Favello A."/>
            <person name="Fraser A."/>
            <person name="Fulton L."/>
            <person name="Gardner A."/>
            <person name="Green P."/>
            <person name="Hawkins T."/>
            <person name="Hillier L."/>
            <person name="Jier M."/>
            <person name="Johnston L."/>
            <person name="Jones M."/>
            <person name="Kershaw J."/>
            <person name="Kirsten J."/>
            <person name="Laisster N."/>
            <person name="Latreille P."/>
            <person name="Lightning J."/>
            <person name="Lloyd C."/>
            <person name="Mortimore B."/>
            <person name="O'Callaghan M."/>
            <person name="Parsons J."/>
            <person name="Percy C."/>
            <person name="Rifken L."/>
            <person name="Roopra A."/>
            <person name="Saunders D."/>
            <person name="Shownkeen R."/>
            <person name="Sims M."/>
            <person name="Smaldon N."/>
            <person name="Smith A."/>
            <person name="Smith M."/>
            <person name="Sonnhammer E."/>
            <person name="Staden R."/>
            <person name="Sulston J."/>
            <person name="Thierry-Mieg J."/>
            <person name="Thomas K."/>
            <person name="Vaudin M."/>
            <person name="Vaughan K."/>
            <person name="Waterston R."/>
            <person name="Watson A."/>
            <person name="Weinstock L."/>
            <person name="Wilkinson-Sproat J."/>
            <person name="Wohldman P."/>
        </authorList>
    </citation>
    <scope>NUCLEOTIDE SEQUENCE [LARGE SCALE GENOMIC DNA]</scope>
    <source>
        <strain>Bristol N2</strain>
    </source>
</reference>
<reference key="2">
    <citation type="journal article" date="1998" name="Science">
        <title>Genome sequence of the nematode C. elegans: a platform for investigating biology.</title>
        <authorList>
            <consortium name="The C. elegans sequencing consortium"/>
        </authorList>
    </citation>
    <scope>NUCLEOTIDE SEQUENCE [LARGE SCALE GENOMIC DNA]</scope>
    <source>
        <strain>Bristol N2</strain>
    </source>
</reference>
<name>PEX19_CAEEL</name>